<organism>
    <name type="scientific">Pongo pygmaeus</name>
    <name type="common">Bornean orangutan</name>
    <dbReference type="NCBI Taxonomy" id="9600"/>
    <lineage>
        <taxon>Eukaryota</taxon>
        <taxon>Metazoa</taxon>
        <taxon>Chordata</taxon>
        <taxon>Craniata</taxon>
        <taxon>Vertebrata</taxon>
        <taxon>Euteleostomi</taxon>
        <taxon>Mammalia</taxon>
        <taxon>Eutheria</taxon>
        <taxon>Euarchontoglires</taxon>
        <taxon>Primates</taxon>
        <taxon>Haplorrhini</taxon>
        <taxon>Catarrhini</taxon>
        <taxon>Hominidae</taxon>
        <taxon>Pongo</taxon>
    </lineage>
</organism>
<feature type="signal peptide" evidence="3">
    <location>
        <begin position="1"/>
        <end position="23"/>
    </location>
</feature>
<feature type="chain" id="PRO_0000034727" description="Toll-like receptor 4">
    <location>
        <begin position="24"/>
        <end position="828"/>
    </location>
</feature>
<feature type="topological domain" description="Extracellular" evidence="3">
    <location>
        <begin position="24"/>
        <end position="629"/>
    </location>
</feature>
<feature type="transmembrane region" description="Helical" evidence="3">
    <location>
        <begin position="630"/>
        <end position="650"/>
    </location>
</feature>
<feature type="topological domain" description="Cytoplasmic" evidence="3">
    <location>
        <begin position="651"/>
        <end position="828"/>
    </location>
</feature>
<feature type="repeat" description="LRR 1">
    <location>
        <begin position="53"/>
        <end position="74"/>
    </location>
</feature>
<feature type="repeat" description="LRR 2">
    <location>
        <begin position="77"/>
        <end position="98"/>
    </location>
</feature>
<feature type="repeat" description="LRR 3">
    <location>
        <begin position="101"/>
        <end position="122"/>
    </location>
</feature>
<feature type="repeat" description="LRR 4">
    <location>
        <begin position="125"/>
        <end position="146"/>
    </location>
</feature>
<feature type="repeat" description="LRR 5">
    <location>
        <begin position="149"/>
        <end position="170"/>
    </location>
</feature>
<feature type="repeat" description="LRR 6">
    <location>
        <begin position="174"/>
        <end position="195"/>
    </location>
</feature>
<feature type="repeat" description="LRR 7">
    <location>
        <begin position="203"/>
        <end position="223"/>
    </location>
</feature>
<feature type="repeat" description="LRR 8">
    <location>
        <begin position="225"/>
        <end position="245"/>
    </location>
</feature>
<feature type="repeat" description="LRR 9">
    <location>
        <begin position="372"/>
        <end position="392"/>
    </location>
</feature>
<feature type="repeat" description="LRR 10">
    <location>
        <begin position="398"/>
        <end position="420"/>
    </location>
</feature>
<feature type="repeat" description="LRR 11">
    <location>
        <begin position="421"/>
        <end position="442"/>
    </location>
</feature>
<feature type="repeat" description="LRR 12">
    <location>
        <begin position="446"/>
        <end position="454"/>
    </location>
</feature>
<feature type="repeat" description="LRR 13">
    <location>
        <begin position="470"/>
        <end position="493"/>
    </location>
</feature>
<feature type="repeat" description="LRR 14">
    <location>
        <begin position="495"/>
        <end position="516"/>
    </location>
</feature>
<feature type="repeat" description="LRR 15">
    <location>
        <begin position="519"/>
        <end position="540"/>
    </location>
</feature>
<feature type="repeat" description="LRR 16">
    <location>
        <begin position="543"/>
        <end position="563"/>
    </location>
</feature>
<feature type="domain" description="LRRCT">
    <location>
        <begin position="577"/>
        <end position="627"/>
    </location>
</feature>
<feature type="domain" description="TIR" evidence="4">
    <location>
        <begin position="670"/>
        <end position="813"/>
    </location>
</feature>
<feature type="glycosylation site" description="N-linked (GlcNAc...) asparagine" evidence="3">
    <location>
        <position position="33"/>
    </location>
</feature>
<feature type="glycosylation site" description="N-linked (GlcNAc...) asparagine" evidence="3">
    <location>
        <position position="171"/>
    </location>
</feature>
<feature type="glycosylation site" description="N-linked (GlcNAc...) asparagine" evidence="3">
    <location>
        <position position="203"/>
    </location>
</feature>
<feature type="glycosylation site" description="N-linked (GlcNAc...) asparagine" evidence="3">
    <location>
        <position position="280"/>
    </location>
</feature>
<feature type="glycosylation site" description="N-linked (GlcNAc...) asparagine" evidence="3">
    <location>
        <position position="307"/>
    </location>
</feature>
<feature type="glycosylation site" description="N-linked (GlcNAc...) asparagine" evidence="3">
    <location>
        <position position="495"/>
    </location>
</feature>
<feature type="glycosylation site" description="N-linked (GlcNAc...) asparagine" evidence="3">
    <location>
        <position position="524"/>
    </location>
</feature>
<feature type="glycosylation site" description="N-linked (GlcNAc...) asparagine" evidence="3">
    <location>
        <position position="573"/>
    </location>
</feature>
<feature type="glycosylation site" description="N-linked (GlcNAc...) asparagine" evidence="3">
    <location>
        <position position="622"/>
    </location>
</feature>
<feature type="glycosylation site" description="N-linked (GlcNAc...) asparagine" evidence="3">
    <location>
        <position position="628"/>
    </location>
</feature>
<feature type="disulfide bond" evidence="1">
    <location>
        <begin position="29"/>
        <end position="38"/>
    </location>
</feature>
<feature type="disulfide bond" evidence="1">
    <location>
        <begin position="279"/>
        <end position="304"/>
    </location>
</feature>
<feature type="disulfide bond" evidence="1">
    <location>
        <begin position="388"/>
        <end position="389"/>
    </location>
</feature>
<feature type="disulfide bond" evidence="1">
    <location>
        <begin position="581"/>
        <end position="607"/>
    </location>
</feature>
<feature type="disulfide bond" evidence="1">
    <location>
        <begin position="583"/>
        <end position="625"/>
    </location>
</feature>
<name>TLR4_PONPY</name>
<sequence>MMSASRLAGTLIPAMAFLSCVRPESWEPCVVPNITYQCMELNFYKIPDNLPFSTKNLDLSFNPLRHLGSYSFFSFPELQVLDLSRCEIQTIEDGAYQSLSHLSTLILTGNPIQNLALGAFSGLSSLQKLVAVETNLASLENFPIGHLKTLKELNVAHNLIQSFKLPEYFSNLTNLEHLDLSSNKIQSIYCKDLQVLHQMPLLNLSLDLSLNAMNFIQPGAFKEIRLHKLTLRNSFDSLNVMKTCIQGLAGLEVHHLVLGEFRNEKNLEKFDTSALEGLCNLTIEEFRLAYLDYYLDDIIDLFNCLANVSSFSLVSVTIKSVKDFSYNFGWQHLELVNCKFGQFPTLELKSLKRLTFTANKGGNAFSEVDLPSLEFLDLSRNGLSFKGCCSQSDFGTTSLKYLDLSFNDVITMGSNFLGLEQLEHLDFQHSNLKQMSEFSVFLSLRNLIYLDISHTHTRVAFNGIFNGLSSLKVLKMAGNSFQENFLPDIFTELRNLTFLDLSQCQLEQLSPTAFNSLSSLQVLNMSHNNFFSLDTFPYKCLNSLQVLDYSLNHIMTSKKQELQHFPSSLAFLNLTQNDFACTCEHQSFLQWIKDQRQLLVEVERMECATPSDKQGMPVLSLNITCQMNKTVIGVSVFSVLVVSVVAVLVYKFYFHLMLLAGCIKYGRGENTYDAFVIYSSQDEDWVRNELVKNLEEGVPTFQLCLHYRDFIPGVAIAANIIHEGFHKSRKVIVVVSQHFIQSRWCIFEYEIAQTWQFLSSRAGIIFIVLQKVEKTLLRQQVELYRLLSRNTYLEWEDSVLGRHIFWRRLRKALLDGKSWNPEGTVGTG</sequence>
<dbReference type="EMBL" id="AF497562">
    <property type="protein sequence ID" value="AAM18616.1"/>
    <property type="molecule type" value="Genomic_DNA"/>
</dbReference>
<dbReference type="EMBL" id="AF497560">
    <property type="protein sequence ID" value="AAM18616.1"/>
    <property type="status" value="JOINED"/>
    <property type="molecule type" value="Genomic_DNA"/>
</dbReference>
<dbReference type="EMBL" id="AF497561">
    <property type="protein sequence ID" value="AAM18616.1"/>
    <property type="status" value="JOINED"/>
    <property type="molecule type" value="Genomic_DNA"/>
</dbReference>
<dbReference type="SMR" id="Q8SPE9"/>
<dbReference type="GlyCosmos" id="Q8SPE9">
    <property type="glycosylation" value="10 sites, No reported glycans"/>
</dbReference>
<dbReference type="GO" id="GO:0005769">
    <property type="term" value="C:early endosome"/>
    <property type="evidence" value="ECO:0007669"/>
    <property type="project" value="UniProtKB-SubCell"/>
</dbReference>
<dbReference type="GO" id="GO:0046696">
    <property type="term" value="C:lipopolysaccharide receptor complex"/>
    <property type="evidence" value="ECO:0000250"/>
    <property type="project" value="UniProtKB"/>
</dbReference>
<dbReference type="GO" id="GO:0005886">
    <property type="term" value="C:plasma membrane"/>
    <property type="evidence" value="ECO:0000250"/>
    <property type="project" value="UniProtKB"/>
</dbReference>
<dbReference type="GO" id="GO:0001726">
    <property type="term" value="C:ruffle"/>
    <property type="evidence" value="ECO:0007669"/>
    <property type="project" value="UniProtKB-SubCell"/>
</dbReference>
<dbReference type="GO" id="GO:0001530">
    <property type="term" value="F:lipopolysaccharide binding"/>
    <property type="evidence" value="ECO:0007669"/>
    <property type="project" value="TreeGrafter"/>
</dbReference>
<dbReference type="GO" id="GO:0001875">
    <property type="term" value="F:lipopolysaccharide immune receptor activity"/>
    <property type="evidence" value="ECO:0000250"/>
    <property type="project" value="UniProtKB"/>
</dbReference>
<dbReference type="GO" id="GO:0061809">
    <property type="term" value="F:NAD+ nucleosidase activity, cyclic ADP-ribose generating"/>
    <property type="evidence" value="ECO:0007669"/>
    <property type="project" value="UniProtKB-EC"/>
</dbReference>
<dbReference type="GO" id="GO:0004888">
    <property type="term" value="F:transmembrane signaling receptor activity"/>
    <property type="evidence" value="ECO:0007669"/>
    <property type="project" value="InterPro"/>
</dbReference>
<dbReference type="GO" id="GO:0050829">
    <property type="term" value="P:defense response to Gram-negative bacterium"/>
    <property type="evidence" value="ECO:0007669"/>
    <property type="project" value="TreeGrafter"/>
</dbReference>
<dbReference type="GO" id="GO:0032497">
    <property type="term" value="P:detection of lipopolysaccharide"/>
    <property type="evidence" value="ECO:0000250"/>
    <property type="project" value="UniProtKB"/>
</dbReference>
<dbReference type="GO" id="GO:0006954">
    <property type="term" value="P:inflammatory response"/>
    <property type="evidence" value="ECO:0007669"/>
    <property type="project" value="UniProtKB-KW"/>
</dbReference>
<dbReference type="GO" id="GO:0045087">
    <property type="term" value="P:innate immune response"/>
    <property type="evidence" value="ECO:0007669"/>
    <property type="project" value="UniProtKB-KW"/>
</dbReference>
<dbReference type="GO" id="GO:0042116">
    <property type="term" value="P:macrophage activation"/>
    <property type="evidence" value="ECO:0000250"/>
    <property type="project" value="UniProtKB"/>
</dbReference>
<dbReference type="GO" id="GO:0002755">
    <property type="term" value="P:MyD88-dependent toll-like receptor signaling pathway"/>
    <property type="evidence" value="ECO:0007669"/>
    <property type="project" value="TreeGrafter"/>
</dbReference>
<dbReference type="GO" id="GO:0032731">
    <property type="term" value="P:positive regulation of interleukin-1 beta production"/>
    <property type="evidence" value="ECO:0000250"/>
    <property type="project" value="UniProtKB"/>
</dbReference>
<dbReference type="GO" id="GO:1900227">
    <property type="term" value="P:positive regulation of NLRP3 inflammasome complex assembly"/>
    <property type="evidence" value="ECO:0000250"/>
    <property type="project" value="UniProtKB"/>
</dbReference>
<dbReference type="GO" id="GO:0034142">
    <property type="term" value="P:toll-like receptor 4 signaling pathway"/>
    <property type="evidence" value="ECO:0007669"/>
    <property type="project" value="TreeGrafter"/>
</dbReference>
<dbReference type="FunFam" id="3.40.50.10140:FF:000006">
    <property type="entry name" value="Toll-like receptor 4"/>
    <property type="match status" value="1"/>
</dbReference>
<dbReference type="FunFam" id="3.80.10.10:FF:000195">
    <property type="entry name" value="Toll-like receptor 4"/>
    <property type="match status" value="1"/>
</dbReference>
<dbReference type="Gene3D" id="3.80.10.10">
    <property type="entry name" value="Ribonuclease Inhibitor"/>
    <property type="match status" value="1"/>
</dbReference>
<dbReference type="Gene3D" id="3.40.50.10140">
    <property type="entry name" value="Toll/interleukin-1 receptor homology (TIR) domain"/>
    <property type="match status" value="1"/>
</dbReference>
<dbReference type="InterPro" id="IPR000483">
    <property type="entry name" value="Cys-rich_flank_reg_C"/>
</dbReference>
<dbReference type="InterPro" id="IPR001611">
    <property type="entry name" value="Leu-rich_rpt"/>
</dbReference>
<dbReference type="InterPro" id="IPR003591">
    <property type="entry name" value="Leu-rich_rpt_typical-subtyp"/>
</dbReference>
<dbReference type="InterPro" id="IPR032675">
    <property type="entry name" value="LRR_dom_sf"/>
</dbReference>
<dbReference type="InterPro" id="IPR000157">
    <property type="entry name" value="TIR_dom"/>
</dbReference>
<dbReference type="InterPro" id="IPR017241">
    <property type="entry name" value="Toll-like_receptor"/>
</dbReference>
<dbReference type="InterPro" id="IPR035897">
    <property type="entry name" value="Toll_tir_struct_dom_sf"/>
</dbReference>
<dbReference type="PANTHER" id="PTHR24365">
    <property type="entry name" value="TOLL-LIKE RECEPTOR"/>
    <property type="match status" value="1"/>
</dbReference>
<dbReference type="PANTHER" id="PTHR24365:SF521">
    <property type="entry name" value="TOLL-LIKE RECEPTOR 4"/>
    <property type="match status" value="1"/>
</dbReference>
<dbReference type="Pfam" id="PF13516">
    <property type="entry name" value="LRR_6"/>
    <property type="match status" value="1"/>
</dbReference>
<dbReference type="Pfam" id="PF13855">
    <property type="entry name" value="LRR_8"/>
    <property type="match status" value="3"/>
</dbReference>
<dbReference type="Pfam" id="PF01582">
    <property type="entry name" value="TIR"/>
    <property type="match status" value="1"/>
</dbReference>
<dbReference type="PIRSF" id="PIRSF037595">
    <property type="entry name" value="Toll-like_receptor"/>
    <property type="match status" value="1"/>
</dbReference>
<dbReference type="PRINTS" id="PR00019">
    <property type="entry name" value="LEURICHRPT"/>
</dbReference>
<dbReference type="SMART" id="SM00365">
    <property type="entry name" value="LRR_SD22"/>
    <property type="match status" value="4"/>
</dbReference>
<dbReference type="SMART" id="SM00369">
    <property type="entry name" value="LRR_TYP"/>
    <property type="match status" value="11"/>
</dbReference>
<dbReference type="SMART" id="SM00082">
    <property type="entry name" value="LRRCT"/>
    <property type="match status" value="1"/>
</dbReference>
<dbReference type="SMART" id="SM00255">
    <property type="entry name" value="TIR"/>
    <property type="match status" value="1"/>
</dbReference>
<dbReference type="SUPFAM" id="SSF52075">
    <property type="entry name" value="Outer arm dynein light chain 1"/>
    <property type="match status" value="1"/>
</dbReference>
<dbReference type="SUPFAM" id="SSF52047">
    <property type="entry name" value="RNI-like"/>
    <property type="match status" value="1"/>
</dbReference>
<dbReference type="SUPFAM" id="SSF52200">
    <property type="entry name" value="Toll/Interleukin receptor TIR domain"/>
    <property type="match status" value="1"/>
</dbReference>
<dbReference type="PROSITE" id="PS51450">
    <property type="entry name" value="LRR"/>
    <property type="match status" value="11"/>
</dbReference>
<dbReference type="PROSITE" id="PS50104">
    <property type="entry name" value="TIR"/>
    <property type="match status" value="1"/>
</dbReference>
<protein>
    <recommendedName>
        <fullName>Toll-like receptor 4</fullName>
    </recommendedName>
    <cdAntigenName>CD284</cdAntigenName>
</protein>
<comment type="function">
    <text evidence="1">Transmembrane receptor that functions as a pattern recognition receptor recognizing pathogen- and damage-associated molecular patterns (PAMPs and DAMPs) to induce innate immune responses via downstream signaling pathways. At the plasma membrane, cooperates with LY96 to mediate the innate immune response to bacterial lipopolysaccharide (LPS). Also involved in LPS-independent inflammatory responses triggered by free fatty acids, such as palmitate, and Ni(2+). Mechanistically, acts via MYD88, TIRAP and TRAF6, leading to NF-kappa-B activation, cytokine secretion and the inflammatory response. Alternatively, CD14-mediated TLR4 internalization via endocytosis is associated with the initiation of a MYD88-independent signaling via the TICAM1-TBK1-IRF3 axis leading to type I interferon production. In addition to the secretion of proinflammatory cytokines, initiates the activation of NLRP3 inflammasome and formation of a positive feedback loop between autophagy and NF-kappa-B signaling cascade. In complex with TLR6, promotes inflammation in monocytes/macrophages by associating with TLR6 and the receptor CD86. Upon ligand binding, such as oxLDL or amyloid-beta 42, the TLR4:TLR6 complex is internalized and triggers inflammatory response, leading to NF-kappa-B-dependent production of CXCL1, CXCL2 and CCL9 cytokines, via MYD88 signaling pathway, and CCL5 cytokine, via TICAM1 signaling pathway. In myeloid dendritic cells, vesicular stomatitis virus glycoprotein G but not LPS promotes the activation of IRF7, leading to type I IFN production in a CD14-dependent manner.</text>
</comment>
<comment type="subunit">
    <text evidence="1 2">Belongs to the lipopolysaccharide (LPS) receptor, a multi-protein complex containing at least CD14, LY96 and TLR4. Binding to bacterial LPS leads to homodimerization. Interacts with LY96 via the extracellular domain. Interacts with MYD88 and TIRAP via their respective TIR domains. Interacts with TICAM2. Interacts with NOX4. Interacts with CNPY3 and HSP90B1; this interaction is required for proper folding in the endoplasmic reticulum. Interacts with MAP3K21; this interaction leads to negative regulation of TLR4 signaling. Interacts with CD36, following CD36 stimulation by oxLDL or amyloid-beta 42, and forms a heterodimer with TLR6. The trimeric complex is internalized and triggers inflammatory response. LYN kinase activity facilitates TLR4-TLR6 heterodimerization and signal initiation. Interacts with TICAM1 in response to LPS in a WDFY1-dependent manner. Interacts with WDFY1 in response to LPS. Interacts with SMPDL3B. Interacts with CEACAM1; upon lipopolysaccharide stimulation, forms a complex including TLR4 and the phosphorylated form of SYK and CEACAM1, which in turn, recruits PTPN6 that dephosphorylates SYK, reducing the production of reactive oxygen species (ROS) and lysosome disruption, which in turn, reduces the activity of the inflammasome. Interacts with RFTN1; the interaction occurs in response to lipopolysaccharide stimulation. Interacts with SCIMP; the interaction occurs in response to lipopolysaccharide stimulation and is enhanced by phosphorylation of SCIMP by LYN (By similarity). This interaction facilitates the phosphorylation of TLR4 by LYN which elicits a selective cytokine response in macrophages (By similarity). Interacts with TRAF3IP3 (By similarity). Interacts with TREM1; this interaction enhances TLR4-mediated inflammatory response (By similarity). Interacts with ZG16B/PAUF (By similarity). Interacts with CD82; this interaction inhibits TLR4-mediated signaling pathway (By similarity).</text>
</comment>
<comment type="subcellular location">
    <subcellularLocation>
        <location evidence="1">Cell membrane</location>
        <topology evidence="1">Single-pass type I membrane protein</topology>
    </subcellularLocation>
    <subcellularLocation>
        <location evidence="1">Early endosome</location>
    </subcellularLocation>
    <subcellularLocation>
        <location evidence="2">Cell projection</location>
        <location evidence="2">Ruffle</location>
    </subcellularLocation>
    <text evidence="1">Upon complex formation with CD36 and TLR6, internalized through dynamin-dependent endocytosis. Colocalizes with RFTN1 at cell membrane and then together with RFTN1 moves to endosomes, upon lipopolysaccharide stimulation.</text>
</comment>
<comment type="domain">
    <text evidence="1">The TIR domain mediates interaction with NOX4.</text>
</comment>
<comment type="PTM">
    <text evidence="2">Phosphorylated on tyrosine residues by LYN after binding lipopolysaccharide.</text>
</comment>
<comment type="PTM">
    <text evidence="1">Ubiquitinated by RNF128 via 'Lys-28'-linked polyubiquitin chains, leading to proteasomal degradation.</text>
</comment>
<comment type="similarity">
    <text evidence="5">Belongs to the Toll-like receptor family.</text>
</comment>
<comment type="caution">
    <text evidence="1 5">In some plant proteins and in human SARM1, the TIR domain has NAD(+) hydrolase (NADase) activity (By similarity). However, despite the presence of the catalytic Asp residue, the isolated TIR domain of human TLR4 lacks NADase activity (By similarity). Based on this, it is unlikely that Toll-like receptors have NADase activity.</text>
</comment>
<reference key="1">
    <citation type="journal article" date="2001" name="Genetics">
        <title>Excess of rare amino acid polymorphisms in the Toll-like receptor 4 in humans.</title>
        <authorList>
            <person name="Smirnova I."/>
            <person name="Hamblin M.T."/>
            <person name="McBride C."/>
            <person name="Beutler B."/>
            <person name="Di Rienzo A."/>
        </authorList>
    </citation>
    <scope>NUCLEOTIDE SEQUENCE [GENOMIC DNA]</scope>
</reference>
<keyword id="KW-1003">Cell membrane</keyword>
<keyword id="KW-0966">Cell projection</keyword>
<keyword id="KW-1015">Disulfide bond</keyword>
<keyword id="KW-0967">Endosome</keyword>
<keyword id="KW-0325">Glycoprotein</keyword>
<keyword id="KW-0391">Immunity</keyword>
<keyword id="KW-0395">Inflammatory response</keyword>
<keyword id="KW-0399">Innate immunity</keyword>
<keyword id="KW-0433">Leucine-rich repeat</keyword>
<keyword id="KW-0472">Membrane</keyword>
<keyword id="KW-0520">NAD</keyword>
<keyword id="KW-0675">Receptor</keyword>
<keyword id="KW-0677">Repeat</keyword>
<keyword id="KW-0732">Signal</keyword>
<keyword id="KW-0812">Transmembrane</keyword>
<keyword id="KW-1133">Transmembrane helix</keyword>
<keyword id="KW-0832">Ubl conjugation</keyword>
<evidence type="ECO:0000250" key="1">
    <source>
        <dbReference type="UniProtKB" id="O00206"/>
    </source>
</evidence>
<evidence type="ECO:0000250" key="2">
    <source>
        <dbReference type="UniProtKB" id="Q9QUK6"/>
    </source>
</evidence>
<evidence type="ECO:0000255" key="3"/>
<evidence type="ECO:0000255" key="4">
    <source>
        <dbReference type="PROSITE-ProRule" id="PRU00204"/>
    </source>
</evidence>
<evidence type="ECO:0000305" key="5"/>
<proteinExistence type="inferred from homology"/>
<accession>Q8SPE9</accession>
<gene>
    <name type="primary">TLR4</name>
</gene>